<accession>Q1MIH6</accession>
<protein>
    <recommendedName>
        <fullName evidence="1">Aspartate carbamoyltransferase catalytic subunit</fullName>
        <ecNumber evidence="1">2.1.3.2</ecNumber>
    </recommendedName>
    <alternativeName>
        <fullName evidence="1">Aspartate transcarbamylase</fullName>
        <shortName evidence="1">ATCase</shortName>
    </alternativeName>
</protein>
<dbReference type="EC" id="2.1.3.2" evidence="1"/>
<dbReference type="EMBL" id="AM236080">
    <property type="protein sequence ID" value="CAK07234.1"/>
    <property type="molecule type" value="Genomic_DNA"/>
</dbReference>
<dbReference type="RefSeq" id="WP_011651398.1">
    <property type="nucleotide sequence ID" value="NC_008380.1"/>
</dbReference>
<dbReference type="SMR" id="Q1MIH6"/>
<dbReference type="EnsemblBacteria" id="CAK07234">
    <property type="protein sequence ID" value="CAK07234"/>
    <property type="gene ID" value="RL1739"/>
</dbReference>
<dbReference type="KEGG" id="rle:RL1739"/>
<dbReference type="eggNOG" id="COG0540">
    <property type="taxonomic scope" value="Bacteria"/>
</dbReference>
<dbReference type="HOGENOM" id="CLU_043846_2_0_5"/>
<dbReference type="UniPathway" id="UPA00070">
    <property type="reaction ID" value="UER00116"/>
</dbReference>
<dbReference type="Proteomes" id="UP000006575">
    <property type="component" value="Chromosome"/>
</dbReference>
<dbReference type="GO" id="GO:0005829">
    <property type="term" value="C:cytosol"/>
    <property type="evidence" value="ECO:0007669"/>
    <property type="project" value="TreeGrafter"/>
</dbReference>
<dbReference type="GO" id="GO:0016597">
    <property type="term" value="F:amino acid binding"/>
    <property type="evidence" value="ECO:0007669"/>
    <property type="project" value="InterPro"/>
</dbReference>
<dbReference type="GO" id="GO:0004070">
    <property type="term" value="F:aspartate carbamoyltransferase activity"/>
    <property type="evidence" value="ECO:0007669"/>
    <property type="project" value="UniProtKB-UniRule"/>
</dbReference>
<dbReference type="GO" id="GO:0006207">
    <property type="term" value="P:'de novo' pyrimidine nucleobase biosynthetic process"/>
    <property type="evidence" value="ECO:0007669"/>
    <property type="project" value="InterPro"/>
</dbReference>
<dbReference type="GO" id="GO:0044205">
    <property type="term" value="P:'de novo' UMP biosynthetic process"/>
    <property type="evidence" value="ECO:0007669"/>
    <property type="project" value="UniProtKB-UniRule"/>
</dbReference>
<dbReference type="GO" id="GO:0006520">
    <property type="term" value="P:amino acid metabolic process"/>
    <property type="evidence" value="ECO:0007669"/>
    <property type="project" value="InterPro"/>
</dbReference>
<dbReference type="FunFam" id="3.40.50.1370:FF:000007">
    <property type="entry name" value="Aspartate carbamoyltransferase"/>
    <property type="match status" value="1"/>
</dbReference>
<dbReference type="Gene3D" id="3.40.50.1370">
    <property type="entry name" value="Aspartate/ornithine carbamoyltransferase"/>
    <property type="match status" value="2"/>
</dbReference>
<dbReference type="HAMAP" id="MF_00001">
    <property type="entry name" value="Asp_carb_tr"/>
    <property type="match status" value="1"/>
</dbReference>
<dbReference type="InterPro" id="IPR006132">
    <property type="entry name" value="Asp/Orn_carbamoyltranf_P-bd"/>
</dbReference>
<dbReference type="InterPro" id="IPR006130">
    <property type="entry name" value="Asp/Orn_carbamoylTrfase"/>
</dbReference>
<dbReference type="InterPro" id="IPR036901">
    <property type="entry name" value="Asp/Orn_carbamoylTrfase_sf"/>
</dbReference>
<dbReference type="InterPro" id="IPR002082">
    <property type="entry name" value="Asp_carbamoyltransf"/>
</dbReference>
<dbReference type="InterPro" id="IPR006131">
    <property type="entry name" value="Asp_carbamoyltransf_Asp/Orn-bd"/>
</dbReference>
<dbReference type="NCBIfam" id="TIGR00670">
    <property type="entry name" value="asp_carb_tr"/>
    <property type="match status" value="1"/>
</dbReference>
<dbReference type="NCBIfam" id="NF002032">
    <property type="entry name" value="PRK00856.1"/>
    <property type="match status" value="1"/>
</dbReference>
<dbReference type="PANTHER" id="PTHR45753:SF6">
    <property type="entry name" value="ASPARTATE CARBAMOYLTRANSFERASE"/>
    <property type="match status" value="1"/>
</dbReference>
<dbReference type="PANTHER" id="PTHR45753">
    <property type="entry name" value="ORNITHINE CARBAMOYLTRANSFERASE, MITOCHONDRIAL"/>
    <property type="match status" value="1"/>
</dbReference>
<dbReference type="Pfam" id="PF00185">
    <property type="entry name" value="OTCace"/>
    <property type="match status" value="1"/>
</dbReference>
<dbReference type="Pfam" id="PF02729">
    <property type="entry name" value="OTCace_N"/>
    <property type="match status" value="1"/>
</dbReference>
<dbReference type="PRINTS" id="PR00100">
    <property type="entry name" value="AOTCASE"/>
</dbReference>
<dbReference type="PRINTS" id="PR00101">
    <property type="entry name" value="ATCASE"/>
</dbReference>
<dbReference type="SUPFAM" id="SSF53671">
    <property type="entry name" value="Aspartate/ornithine carbamoyltransferase"/>
    <property type="match status" value="1"/>
</dbReference>
<dbReference type="PROSITE" id="PS00097">
    <property type="entry name" value="CARBAMOYLTRANSFERASE"/>
    <property type="match status" value="1"/>
</dbReference>
<sequence length="318" mass="34474">MVFFPHRHLIGIKGLTEQDITYLLDKADEAVKISRQREKKTSTLRGLTQINLFFEASTRTQASFELAGKRLGADVMNMSVGNSSVKKGETLIDTAMTLNAMRPDVLVIRHSSAGAAALLAQKVSCSVVNAGDGQHEHPTQALLDALTIRRAKGKLSRIIVAICGDVLHSRVARSNILLLNAMGARVRVVAPATLLPAGIAEMGVEVFHSMREGLKDADVVMMLRLQRERMSGAFVPSVREYYHFYGLDAETLKAAKDDALVMHPGPMNRGVEIASEVADGPQSVIAEQVEMGVAVRMAVMETLLVSQNQGPRSDGMMA</sequence>
<reference key="1">
    <citation type="journal article" date="2006" name="Genome Biol.">
        <title>The genome of Rhizobium leguminosarum has recognizable core and accessory components.</title>
        <authorList>
            <person name="Young J.P.W."/>
            <person name="Crossman L.C."/>
            <person name="Johnston A.W.B."/>
            <person name="Thomson N.R."/>
            <person name="Ghazoui Z.F."/>
            <person name="Hull K.H."/>
            <person name="Wexler M."/>
            <person name="Curson A.R.J."/>
            <person name="Todd J.D."/>
            <person name="Poole P.S."/>
            <person name="Mauchline T.H."/>
            <person name="East A.K."/>
            <person name="Quail M.A."/>
            <person name="Churcher C."/>
            <person name="Arrowsmith C."/>
            <person name="Cherevach I."/>
            <person name="Chillingworth T."/>
            <person name="Clarke K."/>
            <person name="Cronin A."/>
            <person name="Davis P."/>
            <person name="Fraser A."/>
            <person name="Hance Z."/>
            <person name="Hauser H."/>
            <person name="Jagels K."/>
            <person name="Moule S."/>
            <person name="Mungall K."/>
            <person name="Norbertczak H."/>
            <person name="Rabbinowitsch E."/>
            <person name="Sanders M."/>
            <person name="Simmonds M."/>
            <person name="Whitehead S."/>
            <person name="Parkhill J."/>
        </authorList>
    </citation>
    <scope>NUCLEOTIDE SEQUENCE [LARGE SCALE GENOMIC DNA]</scope>
    <source>
        <strain>DSM 114642 / LMG 32736 / 3841</strain>
    </source>
</reference>
<keyword id="KW-0665">Pyrimidine biosynthesis</keyword>
<keyword id="KW-0808">Transferase</keyword>
<comment type="function">
    <text evidence="1">Catalyzes the condensation of carbamoyl phosphate and aspartate to form carbamoyl aspartate and inorganic phosphate, the committed step in the de novo pyrimidine nucleotide biosynthesis pathway.</text>
</comment>
<comment type="catalytic activity">
    <reaction evidence="1">
        <text>carbamoyl phosphate + L-aspartate = N-carbamoyl-L-aspartate + phosphate + H(+)</text>
        <dbReference type="Rhea" id="RHEA:20013"/>
        <dbReference type="ChEBI" id="CHEBI:15378"/>
        <dbReference type="ChEBI" id="CHEBI:29991"/>
        <dbReference type="ChEBI" id="CHEBI:32814"/>
        <dbReference type="ChEBI" id="CHEBI:43474"/>
        <dbReference type="ChEBI" id="CHEBI:58228"/>
        <dbReference type="EC" id="2.1.3.2"/>
    </reaction>
</comment>
<comment type="pathway">
    <text evidence="1">Pyrimidine metabolism; UMP biosynthesis via de novo pathway; (S)-dihydroorotate from bicarbonate: step 2/3.</text>
</comment>
<comment type="subunit">
    <text evidence="1">Heterododecamer (2C3:3R2) of six catalytic PyrB chains organized as two trimers (C3), and six regulatory PyrI chains organized as three dimers (R2).</text>
</comment>
<comment type="similarity">
    <text evidence="1">Belongs to the aspartate/ornithine carbamoyltransferase superfamily. ATCase family.</text>
</comment>
<proteinExistence type="inferred from homology"/>
<gene>
    <name evidence="1" type="primary">pyrB</name>
    <name type="ordered locus">RL1739</name>
</gene>
<feature type="chain" id="PRO_0000321149" description="Aspartate carbamoyltransferase catalytic subunit">
    <location>
        <begin position="1"/>
        <end position="318"/>
    </location>
</feature>
<feature type="binding site" evidence="1">
    <location>
        <position position="59"/>
    </location>
    <ligand>
        <name>carbamoyl phosphate</name>
        <dbReference type="ChEBI" id="CHEBI:58228"/>
    </ligand>
</feature>
<feature type="binding site" evidence="1">
    <location>
        <position position="60"/>
    </location>
    <ligand>
        <name>carbamoyl phosphate</name>
        <dbReference type="ChEBI" id="CHEBI:58228"/>
    </ligand>
</feature>
<feature type="binding site" evidence="1">
    <location>
        <position position="87"/>
    </location>
    <ligand>
        <name>L-aspartate</name>
        <dbReference type="ChEBI" id="CHEBI:29991"/>
    </ligand>
</feature>
<feature type="binding site" evidence="1">
    <location>
        <position position="109"/>
    </location>
    <ligand>
        <name>carbamoyl phosphate</name>
        <dbReference type="ChEBI" id="CHEBI:58228"/>
    </ligand>
</feature>
<feature type="binding site" evidence="1">
    <location>
        <position position="137"/>
    </location>
    <ligand>
        <name>carbamoyl phosphate</name>
        <dbReference type="ChEBI" id="CHEBI:58228"/>
    </ligand>
</feature>
<feature type="binding site" evidence="1">
    <location>
        <position position="140"/>
    </location>
    <ligand>
        <name>carbamoyl phosphate</name>
        <dbReference type="ChEBI" id="CHEBI:58228"/>
    </ligand>
</feature>
<feature type="binding site" evidence="1">
    <location>
        <position position="170"/>
    </location>
    <ligand>
        <name>L-aspartate</name>
        <dbReference type="ChEBI" id="CHEBI:29991"/>
    </ligand>
</feature>
<feature type="binding site" evidence="1">
    <location>
        <position position="224"/>
    </location>
    <ligand>
        <name>L-aspartate</name>
        <dbReference type="ChEBI" id="CHEBI:29991"/>
    </ligand>
</feature>
<feature type="binding site" evidence="1">
    <location>
        <position position="265"/>
    </location>
    <ligand>
        <name>carbamoyl phosphate</name>
        <dbReference type="ChEBI" id="CHEBI:58228"/>
    </ligand>
</feature>
<feature type="binding site" evidence="1">
    <location>
        <position position="266"/>
    </location>
    <ligand>
        <name>carbamoyl phosphate</name>
        <dbReference type="ChEBI" id="CHEBI:58228"/>
    </ligand>
</feature>
<evidence type="ECO:0000255" key="1">
    <source>
        <dbReference type="HAMAP-Rule" id="MF_00001"/>
    </source>
</evidence>
<name>PYRB_RHIJ3</name>
<organism>
    <name type="scientific">Rhizobium johnstonii (strain DSM 114642 / LMG 32736 / 3841)</name>
    <name type="common">Rhizobium leguminosarum bv. viciae</name>
    <dbReference type="NCBI Taxonomy" id="216596"/>
    <lineage>
        <taxon>Bacteria</taxon>
        <taxon>Pseudomonadati</taxon>
        <taxon>Pseudomonadota</taxon>
        <taxon>Alphaproteobacteria</taxon>
        <taxon>Hyphomicrobiales</taxon>
        <taxon>Rhizobiaceae</taxon>
        <taxon>Rhizobium/Agrobacterium group</taxon>
        <taxon>Rhizobium</taxon>
        <taxon>Rhizobium johnstonii</taxon>
    </lineage>
</organism>